<protein>
    <recommendedName>
        <fullName evidence="1">Endoribonuclease YbeY</fullName>
        <ecNumber evidence="1">3.1.-.-</ecNumber>
    </recommendedName>
</protein>
<dbReference type="EC" id="3.1.-.-" evidence="1"/>
<dbReference type="EMBL" id="BX571965">
    <property type="protein sequence ID" value="CAH34665.1"/>
    <property type="status" value="ALT_INIT"/>
    <property type="molecule type" value="Genomic_DNA"/>
</dbReference>
<dbReference type="SMR" id="Q63X65"/>
<dbReference type="STRING" id="272560.BPSL0672"/>
<dbReference type="KEGG" id="bps:BPSL0672"/>
<dbReference type="eggNOG" id="COG0319">
    <property type="taxonomic scope" value="Bacteria"/>
</dbReference>
<dbReference type="Proteomes" id="UP000000605">
    <property type="component" value="Chromosome 1"/>
</dbReference>
<dbReference type="GO" id="GO:0005737">
    <property type="term" value="C:cytoplasm"/>
    <property type="evidence" value="ECO:0007669"/>
    <property type="project" value="UniProtKB-SubCell"/>
</dbReference>
<dbReference type="GO" id="GO:0004222">
    <property type="term" value="F:metalloendopeptidase activity"/>
    <property type="evidence" value="ECO:0007669"/>
    <property type="project" value="InterPro"/>
</dbReference>
<dbReference type="GO" id="GO:0004521">
    <property type="term" value="F:RNA endonuclease activity"/>
    <property type="evidence" value="ECO:0007669"/>
    <property type="project" value="UniProtKB-UniRule"/>
</dbReference>
<dbReference type="GO" id="GO:0008270">
    <property type="term" value="F:zinc ion binding"/>
    <property type="evidence" value="ECO:0007669"/>
    <property type="project" value="UniProtKB-UniRule"/>
</dbReference>
<dbReference type="GO" id="GO:0006364">
    <property type="term" value="P:rRNA processing"/>
    <property type="evidence" value="ECO:0007669"/>
    <property type="project" value="UniProtKB-UniRule"/>
</dbReference>
<dbReference type="Gene3D" id="3.40.390.30">
    <property type="entry name" value="Metalloproteases ('zincins'), catalytic domain"/>
    <property type="match status" value="1"/>
</dbReference>
<dbReference type="HAMAP" id="MF_00009">
    <property type="entry name" value="Endoribonucl_YbeY"/>
    <property type="match status" value="1"/>
</dbReference>
<dbReference type="InterPro" id="IPR023091">
    <property type="entry name" value="MetalPrtase_cat_dom_sf_prd"/>
</dbReference>
<dbReference type="InterPro" id="IPR002036">
    <property type="entry name" value="YbeY"/>
</dbReference>
<dbReference type="InterPro" id="IPR020549">
    <property type="entry name" value="YbeY_CS"/>
</dbReference>
<dbReference type="NCBIfam" id="NF010570">
    <property type="entry name" value="PRK13963.1"/>
    <property type="match status" value="1"/>
</dbReference>
<dbReference type="NCBIfam" id="TIGR00043">
    <property type="entry name" value="rRNA maturation RNase YbeY"/>
    <property type="match status" value="1"/>
</dbReference>
<dbReference type="PANTHER" id="PTHR46986">
    <property type="entry name" value="ENDORIBONUCLEASE YBEY, CHLOROPLASTIC"/>
    <property type="match status" value="1"/>
</dbReference>
<dbReference type="PANTHER" id="PTHR46986:SF1">
    <property type="entry name" value="ENDORIBONUCLEASE YBEY, CHLOROPLASTIC"/>
    <property type="match status" value="1"/>
</dbReference>
<dbReference type="Pfam" id="PF02130">
    <property type="entry name" value="YbeY"/>
    <property type="match status" value="1"/>
</dbReference>
<dbReference type="SUPFAM" id="SSF55486">
    <property type="entry name" value="Metalloproteases ('zincins'), catalytic domain"/>
    <property type="match status" value="1"/>
</dbReference>
<dbReference type="PROSITE" id="PS01306">
    <property type="entry name" value="UPF0054"/>
    <property type="match status" value="1"/>
</dbReference>
<keyword id="KW-0963">Cytoplasm</keyword>
<keyword id="KW-0255">Endonuclease</keyword>
<keyword id="KW-0378">Hydrolase</keyword>
<keyword id="KW-0479">Metal-binding</keyword>
<keyword id="KW-0540">Nuclease</keyword>
<keyword id="KW-1185">Reference proteome</keyword>
<keyword id="KW-0690">Ribosome biogenesis</keyword>
<keyword id="KW-0698">rRNA processing</keyword>
<keyword id="KW-0862">Zinc</keyword>
<proteinExistence type="inferred from homology"/>
<organism>
    <name type="scientific">Burkholderia pseudomallei (strain K96243)</name>
    <dbReference type="NCBI Taxonomy" id="272560"/>
    <lineage>
        <taxon>Bacteria</taxon>
        <taxon>Pseudomonadati</taxon>
        <taxon>Pseudomonadota</taxon>
        <taxon>Betaproteobacteria</taxon>
        <taxon>Burkholderiales</taxon>
        <taxon>Burkholderiaceae</taxon>
        <taxon>Burkholderia</taxon>
        <taxon>pseudomallei group</taxon>
    </lineage>
</organism>
<sequence length="184" mass="20311">MTVEVGADENPDFAHDETDGAGDESDDEDAQGRDPELDLAVQYGDEIGDAQRKSLPKRKVIAEWLEPAIFSDAQFTVRFVGADEGRALNHSYRHKDYATNVLTFAYGEEPDGVTVADLVLCCPVVEKEAREQGKTLVAHYAHLLVHGALHAQGYDHERGEEDAAEMEALEIDILAKLGFPNPYR</sequence>
<feature type="chain" id="PRO_0000102429" description="Endoribonuclease YbeY">
    <location>
        <begin position="1"/>
        <end position="184"/>
    </location>
</feature>
<feature type="region of interest" description="Disordered" evidence="2">
    <location>
        <begin position="1"/>
        <end position="38"/>
    </location>
</feature>
<feature type="compositionally biased region" description="Acidic residues" evidence="2">
    <location>
        <begin position="1"/>
        <end position="11"/>
    </location>
</feature>
<feature type="compositionally biased region" description="Acidic residues" evidence="2">
    <location>
        <begin position="19"/>
        <end position="29"/>
    </location>
</feature>
<feature type="binding site" evidence="1">
    <location>
        <position position="146"/>
    </location>
    <ligand>
        <name>Zn(2+)</name>
        <dbReference type="ChEBI" id="CHEBI:29105"/>
        <note>catalytic</note>
    </ligand>
</feature>
<feature type="binding site" evidence="1">
    <location>
        <position position="150"/>
    </location>
    <ligand>
        <name>Zn(2+)</name>
        <dbReference type="ChEBI" id="CHEBI:29105"/>
        <note>catalytic</note>
    </ligand>
</feature>
<feature type="binding site" evidence="1">
    <location>
        <position position="156"/>
    </location>
    <ligand>
        <name>Zn(2+)</name>
        <dbReference type="ChEBI" id="CHEBI:29105"/>
        <note>catalytic</note>
    </ligand>
</feature>
<accession>Q63X65</accession>
<reference key="1">
    <citation type="journal article" date="2004" name="Proc. Natl. Acad. Sci. U.S.A.">
        <title>Genomic plasticity of the causative agent of melioidosis, Burkholderia pseudomallei.</title>
        <authorList>
            <person name="Holden M.T.G."/>
            <person name="Titball R.W."/>
            <person name="Peacock S.J."/>
            <person name="Cerdeno-Tarraga A.-M."/>
            <person name="Atkins T."/>
            <person name="Crossman L.C."/>
            <person name="Pitt T."/>
            <person name="Churcher C."/>
            <person name="Mungall K.L."/>
            <person name="Bentley S.D."/>
            <person name="Sebaihia M."/>
            <person name="Thomson N.R."/>
            <person name="Bason N."/>
            <person name="Beacham I.R."/>
            <person name="Brooks K."/>
            <person name="Brown K.A."/>
            <person name="Brown N.F."/>
            <person name="Challis G.L."/>
            <person name="Cherevach I."/>
            <person name="Chillingworth T."/>
            <person name="Cronin A."/>
            <person name="Crossett B."/>
            <person name="Davis P."/>
            <person name="DeShazer D."/>
            <person name="Feltwell T."/>
            <person name="Fraser A."/>
            <person name="Hance Z."/>
            <person name="Hauser H."/>
            <person name="Holroyd S."/>
            <person name="Jagels K."/>
            <person name="Keith K.E."/>
            <person name="Maddison M."/>
            <person name="Moule S."/>
            <person name="Price C."/>
            <person name="Quail M.A."/>
            <person name="Rabbinowitsch E."/>
            <person name="Rutherford K."/>
            <person name="Sanders M."/>
            <person name="Simmonds M."/>
            <person name="Songsivilai S."/>
            <person name="Stevens K."/>
            <person name="Tumapa S."/>
            <person name="Vesaratchavest M."/>
            <person name="Whitehead S."/>
            <person name="Yeats C."/>
            <person name="Barrell B.G."/>
            <person name="Oyston P.C.F."/>
            <person name="Parkhill J."/>
        </authorList>
    </citation>
    <scope>NUCLEOTIDE SEQUENCE [LARGE SCALE GENOMIC DNA]</scope>
    <source>
        <strain>K96243</strain>
    </source>
</reference>
<gene>
    <name evidence="1" type="primary">ybeY</name>
    <name type="ordered locus">BPSL0672</name>
</gene>
<name>YBEY_BURPS</name>
<evidence type="ECO:0000255" key="1">
    <source>
        <dbReference type="HAMAP-Rule" id="MF_00009"/>
    </source>
</evidence>
<evidence type="ECO:0000256" key="2">
    <source>
        <dbReference type="SAM" id="MobiDB-lite"/>
    </source>
</evidence>
<evidence type="ECO:0000305" key="3"/>
<comment type="function">
    <text evidence="1">Single strand-specific metallo-endoribonuclease involved in late-stage 70S ribosome quality control and in maturation of the 3' terminus of the 16S rRNA.</text>
</comment>
<comment type="cofactor">
    <cofactor evidence="1">
        <name>Zn(2+)</name>
        <dbReference type="ChEBI" id="CHEBI:29105"/>
    </cofactor>
    <text evidence="1">Binds 1 zinc ion.</text>
</comment>
<comment type="subcellular location">
    <subcellularLocation>
        <location evidence="1">Cytoplasm</location>
    </subcellularLocation>
</comment>
<comment type="similarity">
    <text evidence="1">Belongs to the endoribonuclease YbeY family.</text>
</comment>
<comment type="sequence caution" evidence="3">
    <conflict type="erroneous initiation">
        <sequence resource="EMBL-CDS" id="CAH34665"/>
    </conflict>
</comment>